<sequence>MDIDLNNQTDNNELIVEDTENPKNPNSTNIEDVGDIGDIEDVGDIGDFENIKKTSVKKISFSPCVFLDLTESEISKYKEHIDKIYLEINQTDYFFENLSLSVKTNDYTNFFNRLGQPHYLLMQKIDDKEIVGSTCIIMRMYVFKCGDKLSRIKYWYISDTRILQEFHKLDLNLKLFKQMYHKLRLKSNRFYTICVDKYQSYTDHLMNKLKIYFNVEFKIDKLLIFLVETTLLRSIEKYFICAYGDIKYMLVPNKTYHIGNKVIKNIYHMQHSRYSSDKSSNISELPINSMVMFCFPEKSPLESIMENLHIKSLITATILSVGMNFFDWHDILTSDIYQI</sequence>
<dbReference type="EMBL" id="AY653733">
    <property type="protein sequence ID" value="AAV50609.1"/>
    <property type="molecule type" value="Genomic_DNA"/>
</dbReference>
<dbReference type="SMR" id="Q5UQS7"/>
<dbReference type="KEGG" id="vg:9924957"/>
<dbReference type="OrthoDB" id="32819at10239"/>
<dbReference type="Proteomes" id="UP000001134">
    <property type="component" value="Genome"/>
</dbReference>
<keyword id="KW-1185">Reference proteome</keyword>
<proteinExistence type="predicted"/>
<gene>
    <name type="ordered locus">MIMI_L340</name>
</gene>
<name>YL340_MIMIV</name>
<organismHost>
    <name type="scientific">Acanthamoeba polyphaga</name>
    <name type="common">Amoeba</name>
    <dbReference type="NCBI Taxonomy" id="5757"/>
</organismHost>
<protein>
    <recommendedName>
        <fullName>Uncharacterized protein L340</fullName>
    </recommendedName>
</protein>
<reference key="1">
    <citation type="journal article" date="2004" name="Science">
        <title>The 1.2-megabase genome sequence of Mimivirus.</title>
        <authorList>
            <person name="Raoult D."/>
            <person name="Audic S."/>
            <person name="Robert C."/>
            <person name="Abergel C."/>
            <person name="Renesto P."/>
            <person name="Ogata H."/>
            <person name="La Scola B."/>
            <person name="Susan M."/>
            <person name="Claverie J.-M."/>
        </authorList>
    </citation>
    <scope>NUCLEOTIDE SEQUENCE [LARGE SCALE GENOMIC DNA]</scope>
    <source>
        <strain>Rowbotham-Bradford</strain>
    </source>
</reference>
<evidence type="ECO:0000256" key="1">
    <source>
        <dbReference type="SAM" id="MobiDB-lite"/>
    </source>
</evidence>
<feature type="chain" id="PRO_0000243988" description="Uncharacterized protein L340">
    <location>
        <begin position="1"/>
        <end position="339"/>
    </location>
</feature>
<feature type="region of interest" description="Disordered" evidence="1">
    <location>
        <begin position="1"/>
        <end position="30"/>
    </location>
</feature>
<feature type="compositionally biased region" description="Polar residues" evidence="1">
    <location>
        <begin position="1"/>
        <end position="12"/>
    </location>
</feature>
<accession>Q5UQS7</accession>
<organism>
    <name type="scientific">Acanthamoeba polyphaga mimivirus</name>
    <name type="common">APMV</name>
    <dbReference type="NCBI Taxonomy" id="212035"/>
    <lineage>
        <taxon>Viruses</taxon>
        <taxon>Varidnaviria</taxon>
        <taxon>Bamfordvirae</taxon>
        <taxon>Nucleocytoviricota</taxon>
        <taxon>Megaviricetes</taxon>
        <taxon>Imitervirales</taxon>
        <taxon>Mimiviridae</taxon>
        <taxon>Megamimivirinae</taxon>
        <taxon>Mimivirus</taxon>
        <taxon>Mimivirus bradfordmassiliense</taxon>
    </lineage>
</organism>